<gene>
    <name type="primary">Lrrc4</name>
</gene>
<proteinExistence type="evidence at protein level"/>
<feature type="signal peptide" evidence="2">
    <location>
        <begin position="1"/>
        <end position="40"/>
    </location>
</feature>
<feature type="chain" id="PRO_0000390393" description="Leucine-rich repeat-containing protein 4">
    <location>
        <begin position="41"/>
        <end position="652"/>
    </location>
</feature>
<feature type="topological domain" description="Extracellular" evidence="2">
    <location>
        <begin position="1"/>
        <end position="526"/>
    </location>
</feature>
<feature type="transmembrane region" description="Helical" evidence="2">
    <location>
        <begin position="527"/>
        <end position="547"/>
    </location>
</feature>
<feature type="topological domain" description="Cytoplasmic" evidence="2">
    <location>
        <begin position="548"/>
        <end position="652"/>
    </location>
</feature>
<feature type="domain" description="LRRNT">
    <location>
        <begin position="41"/>
        <end position="74"/>
    </location>
</feature>
<feature type="repeat" description="LRR 1">
    <location>
        <begin position="75"/>
        <end position="96"/>
    </location>
</feature>
<feature type="repeat" description="LRR 2">
    <location>
        <begin position="99"/>
        <end position="120"/>
    </location>
</feature>
<feature type="repeat" description="LRR 3">
    <location>
        <begin position="123"/>
        <end position="144"/>
    </location>
</feature>
<feature type="repeat" description="LRR 4">
    <location>
        <begin position="147"/>
        <end position="168"/>
    </location>
</feature>
<feature type="repeat" description="LRR 5">
    <location>
        <begin position="171"/>
        <end position="193"/>
    </location>
</feature>
<feature type="repeat" description="LRR 6">
    <location>
        <begin position="196"/>
        <end position="217"/>
    </location>
</feature>
<feature type="repeat" description="LRR 7">
    <location>
        <begin position="218"/>
        <end position="239"/>
    </location>
</feature>
<feature type="repeat" description="LRR 8">
    <location>
        <begin position="242"/>
        <end position="263"/>
    </location>
</feature>
<feature type="repeat" description="LRR 9">
    <location>
        <begin position="266"/>
        <end position="287"/>
    </location>
</feature>
<feature type="domain" description="LRRCT">
    <location>
        <begin position="299"/>
        <end position="351"/>
    </location>
</feature>
<feature type="domain" description="Ig-like C2-type">
    <location>
        <begin position="352"/>
        <end position="441"/>
    </location>
</feature>
<feature type="glycosylation site" description="N-linked (GlcNAc...) asparagine" evidence="2">
    <location>
        <position position="321"/>
    </location>
</feature>
<feature type="glycosylation site" description="N-linked (GlcNAc...) asparagine" evidence="2">
    <location>
        <position position="362"/>
    </location>
</feature>
<feature type="disulfide bond" evidence="3">
    <location>
        <begin position="45"/>
        <end position="51"/>
    </location>
</feature>
<feature type="disulfide bond" evidence="3">
    <location>
        <begin position="49"/>
        <end position="60"/>
    </location>
</feature>
<feature type="disulfide bond" evidence="3">
    <location>
        <begin position="303"/>
        <end position="328"/>
    </location>
</feature>
<feature type="disulfide bond" evidence="3">
    <location>
        <begin position="305"/>
        <end position="349"/>
    </location>
</feature>
<feature type="disulfide bond" evidence="3">
    <location>
        <begin position="373"/>
        <end position="423"/>
    </location>
</feature>
<sequence length="652" mass="72609">MKLLWQVTVHHTWNAVLLPVVYLTAQVWILCAAIAAAASAGPQNCPSVCSCSNQFSKVVCTRRGLSEVPQGIPSNTRYLNLMENNIQMIQADTFRHLHHLEVLQLGRNAIRQIEVGAFNGLASLNTLELFDNWLTVIPSGAFEYLSKLRELWLRNNPIESIPSYAFNRVPSLMRLDLGELKKLEYISEGAFEGLFNLKYLNLGMCNIKDMPNLTPLVGLEELEMSGNHFPEIRPGSFHGLSSLKKLWVMNSQVSLIERNAFDGLASLVELNLAHNNLSSLPHDLFTPLRYLVELHLHHNPWNCDCDILWLAWWLREYIPTNSTCCGRCHAPMHMRGRYLVEVDQASFQCSAPFIMDAPRDLNISEDRMAELKCRTPPMSSVKWLLPNGTVLSHASRHPRISVLNDGTLNFSRVLLIDTGVYTCMVTNVAGNSNASAYLNVSSAELNTPNFSFFTTVTVETTEISPEDITRKYKPVPTTSTGYQPAYTTSTTVLIQTTRVPKQVPVPSTDTTDKMQTSLDEVMKTTKIIIGCFVAVTLLAAAMLIVFYKLRKRHQQRSTVTAARTVEIIQVDEDIPAAASAAATAAPSGVSGEGAVVLPTIHDHINYNTYKPAHGAHWTENSLGNSLHPTVTTISEPYIIQTHTKDKVQETQI</sequence>
<keyword id="KW-1003">Cell membrane</keyword>
<keyword id="KW-1015">Disulfide bond</keyword>
<keyword id="KW-0325">Glycoprotein</keyword>
<keyword id="KW-0393">Immunoglobulin domain</keyword>
<keyword id="KW-0433">Leucine-rich repeat</keyword>
<keyword id="KW-0472">Membrane</keyword>
<keyword id="KW-0628">Postsynaptic cell membrane</keyword>
<keyword id="KW-1185">Reference proteome</keyword>
<keyword id="KW-0677">Repeat</keyword>
<keyword id="KW-0732">Signal</keyword>
<keyword id="KW-0770">Synapse</keyword>
<keyword id="KW-0812">Transmembrane</keyword>
<keyword id="KW-1133">Transmembrane helix</keyword>
<evidence type="ECO:0000250" key="1"/>
<evidence type="ECO:0000255" key="2"/>
<evidence type="ECO:0000255" key="3">
    <source>
        <dbReference type="PROSITE-ProRule" id="PRU00114"/>
    </source>
</evidence>
<evidence type="ECO:0000269" key="4">
    <source>
    </source>
</evidence>
<accession>Q45R42</accession>
<organism>
    <name type="scientific">Rattus norvegicus</name>
    <name type="common">Rat</name>
    <dbReference type="NCBI Taxonomy" id="10116"/>
    <lineage>
        <taxon>Eukaryota</taxon>
        <taxon>Metazoa</taxon>
        <taxon>Chordata</taxon>
        <taxon>Craniata</taxon>
        <taxon>Vertebrata</taxon>
        <taxon>Euteleostomi</taxon>
        <taxon>Mammalia</taxon>
        <taxon>Eutheria</taxon>
        <taxon>Euarchontoglires</taxon>
        <taxon>Glires</taxon>
        <taxon>Rodentia</taxon>
        <taxon>Myomorpha</taxon>
        <taxon>Muroidea</taxon>
        <taxon>Muridae</taxon>
        <taxon>Murinae</taxon>
        <taxon>Rattus</taxon>
    </lineage>
</organism>
<protein>
    <recommendedName>
        <fullName>Leucine-rich repeat-containing protein 4</fullName>
    </recommendedName>
    <alternativeName>
        <fullName>Netrin-G2 ligand</fullName>
        <shortName>NGL-2</shortName>
    </alternativeName>
</protein>
<dbReference type="EMBL" id="DQ119102">
    <property type="protein sequence ID" value="AAZ23788.1"/>
    <property type="molecule type" value="mRNA"/>
</dbReference>
<dbReference type="RefSeq" id="NP_001032413.1">
    <property type="nucleotide sequence ID" value="NM_001037336.1"/>
</dbReference>
<dbReference type="SMR" id="Q45R42"/>
<dbReference type="BioGRID" id="566016">
    <property type="interactions" value="3"/>
</dbReference>
<dbReference type="FunCoup" id="Q45R42">
    <property type="interactions" value="2315"/>
</dbReference>
<dbReference type="STRING" id="10116.ENSRNOP00000010673"/>
<dbReference type="GlyCosmos" id="Q45R42">
    <property type="glycosylation" value="2 sites, No reported glycans"/>
</dbReference>
<dbReference type="GlyGen" id="Q45R42">
    <property type="glycosylation" value="2 sites, 1 N-linked glycan (1 site)"/>
</dbReference>
<dbReference type="iPTMnet" id="Q45R42"/>
<dbReference type="PhosphoSitePlus" id="Q45R42"/>
<dbReference type="PaxDb" id="10116-ENSRNOP00000010673"/>
<dbReference type="Ensembl" id="ENSRNOT00000010673.4">
    <property type="protein sequence ID" value="ENSRNOP00000010673.1"/>
    <property type="gene ID" value="ENSRNOG00000008098.4"/>
</dbReference>
<dbReference type="GeneID" id="641521"/>
<dbReference type="KEGG" id="rno:641521"/>
<dbReference type="UCSC" id="RGD:1560026">
    <property type="organism name" value="rat"/>
</dbReference>
<dbReference type="AGR" id="RGD:1560026"/>
<dbReference type="CTD" id="64101"/>
<dbReference type="RGD" id="1560026">
    <property type="gene designation" value="Lrrc4"/>
</dbReference>
<dbReference type="eggNOG" id="KOG0619">
    <property type="taxonomic scope" value="Eukaryota"/>
</dbReference>
<dbReference type="GeneTree" id="ENSGT00940000159260"/>
<dbReference type="HOGENOM" id="CLU_000288_18_24_1"/>
<dbReference type="InParanoid" id="Q45R42"/>
<dbReference type="OMA" id="WTDNNVG"/>
<dbReference type="OrthoDB" id="28057at2759"/>
<dbReference type="PhylomeDB" id="Q45R42"/>
<dbReference type="TreeFam" id="TF324303"/>
<dbReference type="PRO" id="PR:Q45R42"/>
<dbReference type="Proteomes" id="UP000002494">
    <property type="component" value="Chromosome 4"/>
</dbReference>
<dbReference type="Bgee" id="ENSRNOG00000008098">
    <property type="expression patterns" value="Expressed in frontal cortex and 10 other cell types or tissues"/>
</dbReference>
<dbReference type="GO" id="GO:0043197">
    <property type="term" value="C:dendritic spine"/>
    <property type="evidence" value="ECO:0000266"/>
    <property type="project" value="RGD"/>
</dbReference>
<dbReference type="GO" id="GO:0060076">
    <property type="term" value="C:excitatory synapse"/>
    <property type="evidence" value="ECO:0000266"/>
    <property type="project" value="RGD"/>
</dbReference>
<dbReference type="GO" id="GO:0098978">
    <property type="term" value="C:glutamatergic synapse"/>
    <property type="evidence" value="ECO:0000314"/>
    <property type="project" value="SynGO"/>
</dbReference>
<dbReference type="GO" id="GO:0044309">
    <property type="term" value="C:neuron spine"/>
    <property type="evidence" value="ECO:0000266"/>
    <property type="project" value="RGD"/>
</dbReference>
<dbReference type="GO" id="GO:0005886">
    <property type="term" value="C:plasma membrane"/>
    <property type="evidence" value="ECO:0000318"/>
    <property type="project" value="GO_Central"/>
</dbReference>
<dbReference type="GO" id="GO:0098839">
    <property type="term" value="C:postsynaptic density membrane"/>
    <property type="evidence" value="ECO:0000314"/>
    <property type="project" value="SynGO"/>
</dbReference>
<dbReference type="GO" id="GO:0045211">
    <property type="term" value="C:postsynaptic membrane"/>
    <property type="evidence" value="ECO:0000266"/>
    <property type="project" value="RGD"/>
</dbReference>
<dbReference type="GO" id="GO:0098685">
    <property type="term" value="C:Schaffer collateral - CA1 synapse"/>
    <property type="evidence" value="ECO:0000266"/>
    <property type="project" value="RGD"/>
</dbReference>
<dbReference type="GO" id="GO:0045202">
    <property type="term" value="C:synapse"/>
    <property type="evidence" value="ECO:0000266"/>
    <property type="project" value="RGD"/>
</dbReference>
<dbReference type="GO" id="GO:1904861">
    <property type="term" value="P:excitatory synapse assembly"/>
    <property type="evidence" value="ECO:0000266"/>
    <property type="project" value="RGD"/>
</dbReference>
<dbReference type="GO" id="GO:0050804">
    <property type="term" value="P:modulation of chemical synaptic transmission"/>
    <property type="evidence" value="ECO:0000266"/>
    <property type="project" value="RGD"/>
</dbReference>
<dbReference type="GO" id="GO:0097119">
    <property type="term" value="P:postsynaptic density protein 95 clustering"/>
    <property type="evidence" value="ECO:0000266"/>
    <property type="project" value="RGD"/>
</dbReference>
<dbReference type="GO" id="GO:0050808">
    <property type="term" value="P:synapse organization"/>
    <property type="evidence" value="ECO:0000266"/>
    <property type="project" value="RGD"/>
</dbReference>
<dbReference type="GO" id="GO:0099560">
    <property type="term" value="P:synaptic membrane adhesion"/>
    <property type="evidence" value="ECO:0000314"/>
    <property type="project" value="SynGO"/>
</dbReference>
<dbReference type="FunFam" id="3.80.10.10:FF:000012">
    <property type="entry name" value="Leucine rich repeat containing 4"/>
    <property type="match status" value="1"/>
</dbReference>
<dbReference type="FunFam" id="2.60.40.10:FF:000076">
    <property type="entry name" value="Leucine-rich repeat and Ig domain-containing 4"/>
    <property type="match status" value="1"/>
</dbReference>
<dbReference type="Gene3D" id="2.60.40.10">
    <property type="entry name" value="Immunoglobulins"/>
    <property type="match status" value="1"/>
</dbReference>
<dbReference type="Gene3D" id="3.80.10.10">
    <property type="entry name" value="Ribonuclease Inhibitor"/>
    <property type="match status" value="1"/>
</dbReference>
<dbReference type="InterPro" id="IPR000483">
    <property type="entry name" value="Cys-rich_flank_reg_C"/>
</dbReference>
<dbReference type="InterPro" id="IPR007110">
    <property type="entry name" value="Ig-like_dom"/>
</dbReference>
<dbReference type="InterPro" id="IPR036179">
    <property type="entry name" value="Ig-like_dom_sf"/>
</dbReference>
<dbReference type="InterPro" id="IPR013783">
    <property type="entry name" value="Ig-like_fold"/>
</dbReference>
<dbReference type="InterPro" id="IPR013098">
    <property type="entry name" value="Ig_I-set"/>
</dbReference>
<dbReference type="InterPro" id="IPR003599">
    <property type="entry name" value="Ig_sub"/>
</dbReference>
<dbReference type="InterPro" id="IPR003598">
    <property type="entry name" value="Ig_sub2"/>
</dbReference>
<dbReference type="InterPro" id="IPR001611">
    <property type="entry name" value="Leu-rich_rpt"/>
</dbReference>
<dbReference type="InterPro" id="IPR003591">
    <property type="entry name" value="Leu-rich_rpt_typical-subtyp"/>
</dbReference>
<dbReference type="InterPro" id="IPR032675">
    <property type="entry name" value="LRR_dom_sf"/>
</dbReference>
<dbReference type="InterPro" id="IPR050541">
    <property type="entry name" value="LRR_TM_domain-containing"/>
</dbReference>
<dbReference type="InterPro" id="IPR000372">
    <property type="entry name" value="LRRNT"/>
</dbReference>
<dbReference type="PANTHER" id="PTHR24369">
    <property type="entry name" value="ANTIGEN BSP, PUTATIVE-RELATED"/>
    <property type="match status" value="1"/>
</dbReference>
<dbReference type="PANTHER" id="PTHR24369:SF9">
    <property type="entry name" value="LEUCINE-RICH REPEAT-CONTAINING PROTEIN 4"/>
    <property type="match status" value="1"/>
</dbReference>
<dbReference type="Pfam" id="PF07679">
    <property type="entry name" value="I-set"/>
    <property type="match status" value="1"/>
</dbReference>
<dbReference type="Pfam" id="PF13855">
    <property type="entry name" value="LRR_8"/>
    <property type="match status" value="3"/>
</dbReference>
<dbReference type="SMART" id="SM00409">
    <property type="entry name" value="IG"/>
    <property type="match status" value="1"/>
</dbReference>
<dbReference type="SMART" id="SM00408">
    <property type="entry name" value="IGc2"/>
    <property type="match status" value="1"/>
</dbReference>
<dbReference type="SMART" id="SM00369">
    <property type="entry name" value="LRR_TYP"/>
    <property type="match status" value="7"/>
</dbReference>
<dbReference type="SMART" id="SM00082">
    <property type="entry name" value="LRRCT"/>
    <property type="match status" value="1"/>
</dbReference>
<dbReference type="SMART" id="SM00013">
    <property type="entry name" value="LRRNT"/>
    <property type="match status" value="1"/>
</dbReference>
<dbReference type="SUPFAM" id="SSF48726">
    <property type="entry name" value="Immunoglobulin"/>
    <property type="match status" value="1"/>
</dbReference>
<dbReference type="SUPFAM" id="SSF52058">
    <property type="entry name" value="L domain-like"/>
    <property type="match status" value="1"/>
</dbReference>
<dbReference type="PROSITE" id="PS50835">
    <property type="entry name" value="IG_LIKE"/>
    <property type="match status" value="1"/>
</dbReference>
<dbReference type="PROSITE" id="PS51450">
    <property type="entry name" value="LRR"/>
    <property type="match status" value="7"/>
</dbReference>
<reference key="1">
    <citation type="submission" date="2005-07" db="EMBL/GenBank/DDBJ databases">
        <title>Cloning and expression of LRRC4 in wistar rat.</title>
        <authorList>
            <person name="He H."/>
            <person name="Wei X."/>
            <person name="Minghua W."/>
            <person name="Dan L."/>
            <person name="Xaiomin L."/>
            <person name="Guiyuan L."/>
        </authorList>
    </citation>
    <scope>NUCLEOTIDE SEQUENCE [MRNA]</scope>
    <source>
        <strain>Wistar</strain>
    </source>
</reference>
<reference key="2">
    <citation type="journal article" date="2006" name="Nat. Neurosci.">
        <title>NGL family PSD-95-interacting adhesion molecules regulate excitatory synapse formation.</title>
        <authorList>
            <person name="Kim S."/>
            <person name="Burette A."/>
            <person name="Chung H.S."/>
            <person name="Kwon S.-K."/>
            <person name="Woo J."/>
            <person name="Lee H.W."/>
            <person name="Kim K."/>
            <person name="Kim H."/>
            <person name="Weinberg R.J."/>
            <person name="Kim E."/>
        </authorList>
    </citation>
    <scope>TISSUE SPECIFICITY</scope>
    <scope>SUBCELLULAR LOCATION</scope>
    <scope>GLYCOSYLATION</scope>
</reference>
<comment type="function">
    <text>Synaptic adhesion protein. Regulates the formation of exitatory synapses through the recruitment of pre-and-postsynaptic proteins. Organize the lamina/pathway-specific differentiation of dendrites. Plays an important role for auditory synaptic responses. Involved in the suppression of glioma.</text>
</comment>
<comment type="subunit">
    <text evidence="1">Interacts (via LRR repeats) with NTNG2. Interacts with DLG4. Found in a complex with NMDA receptors.</text>
</comment>
<comment type="subcellular location">
    <subcellularLocation>
        <location evidence="4">Membrane</location>
        <topology evidence="4">Single-pass type I membrane protein</topology>
    </subcellularLocation>
    <subcellularLocation>
        <location evidence="4">Postsynaptic cell membrane</location>
    </subcellularLocation>
    <text evidence="1">LRRC4 and DLG4 are interdependent for synaptic localization.</text>
</comment>
<comment type="tissue specificity">
    <text evidence="4">Mainly expressed in the brain. Expression is concentrated in the olfactory bulb, cortex, hippocampus and cerebellum in adult brain. Detected both embryonically and postnatally with stronger expression in postnatal stages.</text>
</comment>
<comment type="domain">
    <text evidence="1">The last 4 C-terminal residues binds to the first 2 PDZ domains of DLG4.</text>
</comment>
<comment type="PTM">
    <text evidence="4">N-glycosylated.</text>
</comment>
<name>LRRC4_RAT</name>